<organism>
    <name type="scientific">Oryza sativa subsp. japonica</name>
    <name type="common">Rice</name>
    <dbReference type="NCBI Taxonomy" id="39947"/>
    <lineage>
        <taxon>Eukaryota</taxon>
        <taxon>Viridiplantae</taxon>
        <taxon>Streptophyta</taxon>
        <taxon>Embryophyta</taxon>
        <taxon>Tracheophyta</taxon>
        <taxon>Spermatophyta</taxon>
        <taxon>Magnoliopsida</taxon>
        <taxon>Liliopsida</taxon>
        <taxon>Poales</taxon>
        <taxon>Poaceae</taxon>
        <taxon>BOP clade</taxon>
        <taxon>Oryzoideae</taxon>
        <taxon>Oryzeae</taxon>
        <taxon>Oryzinae</taxon>
        <taxon>Oryza</taxon>
        <taxon>Oryza sativa</taxon>
    </lineage>
</organism>
<protein>
    <recommendedName>
        <fullName>Casparian strip membrane protein 2</fullName>
        <shortName>OsCASP2</shortName>
    </recommendedName>
</protein>
<keyword id="KW-1003">Cell membrane</keyword>
<keyword id="KW-0961">Cell wall biogenesis/degradation</keyword>
<keyword id="KW-0472">Membrane</keyword>
<keyword id="KW-1185">Reference proteome</keyword>
<keyword id="KW-0812">Transmembrane</keyword>
<keyword id="KW-1133">Transmembrane helix</keyword>
<feature type="chain" id="PRO_0000370287" description="Casparian strip membrane protein 2">
    <location>
        <begin position="1"/>
        <end position="237"/>
    </location>
</feature>
<feature type="topological domain" description="Cytoplasmic" evidence="2">
    <location>
        <begin position="1"/>
        <end position="69"/>
    </location>
</feature>
<feature type="transmembrane region" description="Helical" evidence="2">
    <location>
        <begin position="70"/>
        <end position="90"/>
    </location>
</feature>
<feature type="topological domain" description="Extracellular" evidence="2">
    <location>
        <begin position="91"/>
        <end position="117"/>
    </location>
</feature>
<feature type="transmembrane region" description="Helical" evidence="2">
    <location>
        <begin position="118"/>
        <end position="138"/>
    </location>
</feature>
<feature type="topological domain" description="Cytoplasmic" evidence="2">
    <location>
        <begin position="139"/>
        <end position="152"/>
    </location>
</feature>
<feature type="transmembrane region" description="Helical" evidence="2">
    <location>
        <begin position="153"/>
        <end position="173"/>
    </location>
</feature>
<feature type="topological domain" description="Extracellular" evidence="2">
    <location>
        <begin position="174"/>
        <end position="205"/>
    </location>
</feature>
<feature type="transmembrane region" description="Helical" evidence="2">
    <location>
        <begin position="206"/>
        <end position="226"/>
    </location>
</feature>
<feature type="topological domain" description="Cytoplasmic" evidence="2">
    <location>
        <begin position="227"/>
        <end position="237"/>
    </location>
</feature>
<feature type="region of interest" description="Disordered" evidence="3">
    <location>
        <begin position="1"/>
        <end position="48"/>
    </location>
</feature>
<evidence type="ECO:0000250" key="1"/>
<evidence type="ECO:0000255" key="2"/>
<evidence type="ECO:0000256" key="3">
    <source>
        <dbReference type="SAM" id="MobiDB-lite"/>
    </source>
</evidence>
<evidence type="ECO:0000305" key="4"/>
<reference key="1">
    <citation type="journal article" date="2005" name="Nature">
        <title>The map-based sequence of the rice genome.</title>
        <authorList>
            <consortium name="International rice genome sequencing project (IRGSP)"/>
        </authorList>
    </citation>
    <scope>NUCLEOTIDE SEQUENCE [LARGE SCALE GENOMIC DNA]</scope>
    <source>
        <strain>cv. Nipponbare</strain>
    </source>
</reference>
<reference key="2">
    <citation type="journal article" date="2013" name="Rice">
        <title>Improvement of the Oryza sativa Nipponbare reference genome using next generation sequence and optical map data.</title>
        <authorList>
            <person name="Kawahara Y."/>
            <person name="de la Bastide M."/>
            <person name="Hamilton J.P."/>
            <person name="Kanamori H."/>
            <person name="McCombie W.R."/>
            <person name="Ouyang S."/>
            <person name="Schwartz D.C."/>
            <person name="Tanaka T."/>
            <person name="Wu J."/>
            <person name="Zhou S."/>
            <person name="Childs K.L."/>
            <person name="Davidson R.M."/>
            <person name="Lin H."/>
            <person name="Quesada-Ocampo L."/>
            <person name="Vaillancourt B."/>
            <person name="Sakai H."/>
            <person name="Lee S.S."/>
            <person name="Kim J."/>
            <person name="Numa H."/>
            <person name="Itoh T."/>
            <person name="Buell C.R."/>
            <person name="Matsumoto T."/>
        </authorList>
    </citation>
    <scope>GENOME REANNOTATION</scope>
    <source>
        <strain>cv. Nipponbare</strain>
    </source>
</reference>
<reference key="3">
    <citation type="journal article" date="2005" name="PLoS Biol.">
        <title>The genomes of Oryza sativa: a history of duplications.</title>
        <authorList>
            <person name="Yu J."/>
            <person name="Wang J."/>
            <person name="Lin W."/>
            <person name="Li S."/>
            <person name="Li H."/>
            <person name="Zhou J."/>
            <person name="Ni P."/>
            <person name="Dong W."/>
            <person name="Hu S."/>
            <person name="Zeng C."/>
            <person name="Zhang J."/>
            <person name="Zhang Y."/>
            <person name="Li R."/>
            <person name="Xu Z."/>
            <person name="Li S."/>
            <person name="Li X."/>
            <person name="Zheng H."/>
            <person name="Cong L."/>
            <person name="Lin L."/>
            <person name="Yin J."/>
            <person name="Geng J."/>
            <person name="Li G."/>
            <person name="Shi J."/>
            <person name="Liu J."/>
            <person name="Lv H."/>
            <person name="Li J."/>
            <person name="Wang J."/>
            <person name="Deng Y."/>
            <person name="Ran L."/>
            <person name="Shi X."/>
            <person name="Wang X."/>
            <person name="Wu Q."/>
            <person name="Li C."/>
            <person name="Ren X."/>
            <person name="Wang J."/>
            <person name="Wang X."/>
            <person name="Li D."/>
            <person name="Liu D."/>
            <person name="Zhang X."/>
            <person name="Ji Z."/>
            <person name="Zhao W."/>
            <person name="Sun Y."/>
            <person name="Zhang Z."/>
            <person name="Bao J."/>
            <person name="Han Y."/>
            <person name="Dong L."/>
            <person name="Ji J."/>
            <person name="Chen P."/>
            <person name="Wu S."/>
            <person name="Liu J."/>
            <person name="Xiao Y."/>
            <person name="Bu D."/>
            <person name="Tan J."/>
            <person name="Yang L."/>
            <person name="Ye C."/>
            <person name="Zhang J."/>
            <person name="Xu J."/>
            <person name="Zhou Y."/>
            <person name="Yu Y."/>
            <person name="Zhang B."/>
            <person name="Zhuang S."/>
            <person name="Wei H."/>
            <person name="Liu B."/>
            <person name="Lei M."/>
            <person name="Yu H."/>
            <person name="Li Y."/>
            <person name="Xu H."/>
            <person name="Wei S."/>
            <person name="He X."/>
            <person name="Fang L."/>
            <person name="Zhang Z."/>
            <person name="Zhang Y."/>
            <person name="Huang X."/>
            <person name="Su Z."/>
            <person name="Tong W."/>
            <person name="Li J."/>
            <person name="Tong Z."/>
            <person name="Li S."/>
            <person name="Ye J."/>
            <person name="Wang L."/>
            <person name="Fang L."/>
            <person name="Lei T."/>
            <person name="Chen C.-S."/>
            <person name="Chen H.-C."/>
            <person name="Xu Z."/>
            <person name="Li H."/>
            <person name="Huang H."/>
            <person name="Zhang F."/>
            <person name="Xu H."/>
            <person name="Li N."/>
            <person name="Zhao C."/>
            <person name="Li S."/>
            <person name="Dong L."/>
            <person name="Huang Y."/>
            <person name="Li L."/>
            <person name="Xi Y."/>
            <person name="Qi Q."/>
            <person name="Li W."/>
            <person name="Zhang B."/>
            <person name="Hu W."/>
            <person name="Zhang Y."/>
            <person name="Tian X."/>
            <person name="Jiao Y."/>
            <person name="Liang X."/>
            <person name="Jin J."/>
            <person name="Gao L."/>
            <person name="Zheng W."/>
            <person name="Hao B."/>
            <person name="Liu S.-M."/>
            <person name="Wang W."/>
            <person name="Yuan L."/>
            <person name="Cao M."/>
            <person name="McDermott J."/>
            <person name="Samudrala R."/>
            <person name="Wang J."/>
            <person name="Wong G.K.-S."/>
            <person name="Yang H."/>
        </authorList>
    </citation>
    <scope>NUCLEOTIDE SEQUENCE [LARGE SCALE GENOMIC DNA]</scope>
    <source>
        <strain>cv. Nipponbare</strain>
    </source>
</reference>
<reference key="4">
    <citation type="journal article" date="2014" name="Plant Physiol.">
        <title>Functional and evolutionary analysis of the CASPARIAN STRIP MEMBRANE DOMAIN PROTEIN family.</title>
        <authorList>
            <person name="Roppolo D."/>
            <person name="Boeckmann B."/>
            <person name="Pfister A."/>
            <person name="Boutet E."/>
            <person name="Rubio M.C."/>
            <person name="Denervaud-Tendon V."/>
            <person name="Vermeer J.E."/>
            <person name="Gheyselinck J."/>
            <person name="Xenarios I."/>
            <person name="Geldner N."/>
        </authorList>
    </citation>
    <scope>GENE FAMILY</scope>
    <scope>NOMENCLATURE</scope>
</reference>
<comment type="function">
    <text evidence="1">Regulates membrane-cell wall junctions and localized cell wall deposition. Required for establishment of the Casparian strip membrane domain (CSD) and the subsequent formation of Casparian strips, a cell wall modification of the root endodermis that determines an apoplastic barrier between the intraorganismal apoplasm and the extraorganismal apoplasm and prevents lateral diffusion (By similarity).</text>
</comment>
<comment type="subunit">
    <text evidence="1">Homodimer and heterodimers.</text>
</comment>
<comment type="subcellular location">
    <subcellularLocation>
        <location evidence="1">Cell membrane</location>
        <topology evidence="1">Multi-pass membrane protein</topology>
    </subcellularLocation>
    <text evidence="1">Very restricted localization following a belt shape within the plasma membrane which coincides with the position of the Casparian strip membrane domain in the root endodermis.</text>
</comment>
<comment type="similarity">
    <text evidence="4">Belongs to the Casparian strip membrane proteins (CASP) family.</text>
</comment>
<sequence length="237" mass="24747">MSGSDTSGSVHVDEHGHGHGKASSSYDGAGAPAPAPAPFQGHRKAGSGSSDVPFLLRSGGSGGDGLRRCLGLIDFVLRVAAFGPTLAAAISIGTSDERLSVFTNYFQFRARFDDFPAFEFFIVANAIAAGYMVLSLPFSAATIMSSKATGVKLLLLICDTIMVGLLTAAASAAAAMVYVAHEGNLRANWVPICLQFHGFCQRTSGAVIASFLAVFVLMVLIVMAAFTMPRRTHHTAS</sequence>
<gene>
    <name type="ordered locus">Os08g0101900</name>
    <name type="ordered locus">LOC_Os08g01160</name>
    <name type="ORF">B1147B12.21</name>
    <name type="ORF">OsJ_024703</name>
    <name type="ORF">P0015C07.4</name>
</gene>
<name>CASP2_ORYSJ</name>
<accession>Q6Z1Y7</accession>
<dbReference type="EMBL" id="AP004654">
    <property type="protein sequence ID" value="BAD33153.1"/>
    <property type="molecule type" value="Genomic_DNA"/>
</dbReference>
<dbReference type="EMBL" id="AP005406">
    <property type="protein sequence ID" value="BAD03557.1"/>
    <property type="molecule type" value="Genomic_DNA"/>
</dbReference>
<dbReference type="EMBL" id="AP014964">
    <property type="status" value="NOT_ANNOTATED_CDS"/>
    <property type="molecule type" value="Genomic_DNA"/>
</dbReference>
<dbReference type="EMBL" id="CM000145">
    <property type="protein sequence ID" value="EAZ41220.1"/>
    <property type="molecule type" value="Genomic_DNA"/>
</dbReference>
<dbReference type="FunCoup" id="Q6Z1Y7">
    <property type="interactions" value="1"/>
</dbReference>
<dbReference type="PaxDb" id="39947-Q6Z1Y7"/>
<dbReference type="GeneID" id="107276110"/>
<dbReference type="KEGG" id="osa:107276110"/>
<dbReference type="eggNOG" id="ENOG502QZV7">
    <property type="taxonomic scope" value="Eukaryota"/>
</dbReference>
<dbReference type="HOGENOM" id="CLU_066104_3_1_1"/>
<dbReference type="InParanoid" id="Q6Z1Y7"/>
<dbReference type="OrthoDB" id="753675at2759"/>
<dbReference type="Proteomes" id="UP000000763">
    <property type="component" value="Chromosome 8"/>
</dbReference>
<dbReference type="Proteomes" id="UP000007752">
    <property type="component" value="Chromosome 8"/>
</dbReference>
<dbReference type="Proteomes" id="UP000059680">
    <property type="component" value="Chromosome 8"/>
</dbReference>
<dbReference type="GO" id="GO:0048226">
    <property type="term" value="C:Casparian strip"/>
    <property type="evidence" value="ECO:0000318"/>
    <property type="project" value="GO_Central"/>
</dbReference>
<dbReference type="GO" id="GO:0005886">
    <property type="term" value="C:plasma membrane"/>
    <property type="evidence" value="ECO:0000318"/>
    <property type="project" value="GO_Central"/>
</dbReference>
<dbReference type="GO" id="GO:0042545">
    <property type="term" value="P:cell wall modification"/>
    <property type="evidence" value="ECO:0000318"/>
    <property type="project" value="GO_Central"/>
</dbReference>
<dbReference type="GO" id="GO:0007043">
    <property type="term" value="P:cell-cell junction assembly"/>
    <property type="evidence" value="ECO:0000318"/>
    <property type="project" value="GO_Central"/>
</dbReference>
<dbReference type="InterPro" id="IPR006459">
    <property type="entry name" value="CASP/CASPL"/>
</dbReference>
<dbReference type="InterPro" id="IPR006702">
    <property type="entry name" value="CASP_dom"/>
</dbReference>
<dbReference type="InterPro" id="IPR044173">
    <property type="entry name" value="CASPL"/>
</dbReference>
<dbReference type="NCBIfam" id="TIGR01569">
    <property type="entry name" value="A_tha_TIGR01569"/>
    <property type="match status" value="1"/>
</dbReference>
<dbReference type="PANTHER" id="PTHR36488:SF11">
    <property type="entry name" value="CASP-LIKE PROTEIN"/>
    <property type="match status" value="1"/>
</dbReference>
<dbReference type="PANTHER" id="PTHR36488">
    <property type="entry name" value="CASP-LIKE PROTEIN 1U1"/>
    <property type="match status" value="1"/>
</dbReference>
<dbReference type="Pfam" id="PF04535">
    <property type="entry name" value="CASP_dom"/>
    <property type="match status" value="1"/>
</dbReference>
<proteinExistence type="inferred from homology"/>